<keyword id="KW-0255">Endonuclease</keyword>
<keyword id="KW-0378">Hydrolase</keyword>
<keyword id="KW-0540">Nuclease</keyword>
<keyword id="KW-0694">RNA-binding</keyword>
<keyword id="KW-0819">tRNA processing</keyword>
<gene>
    <name evidence="1" type="primary">rnpA</name>
    <name type="ordered locus">SACOL2739</name>
</gene>
<evidence type="ECO:0000255" key="1">
    <source>
        <dbReference type="HAMAP-Rule" id="MF_00227"/>
    </source>
</evidence>
<organism>
    <name type="scientific">Staphylococcus aureus (strain COL)</name>
    <dbReference type="NCBI Taxonomy" id="93062"/>
    <lineage>
        <taxon>Bacteria</taxon>
        <taxon>Bacillati</taxon>
        <taxon>Bacillota</taxon>
        <taxon>Bacilli</taxon>
        <taxon>Bacillales</taxon>
        <taxon>Staphylococcaceae</taxon>
        <taxon>Staphylococcus</taxon>
    </lineage>
</organism>
<feature type="chain" id="PRO_0000198525" description="Ribonuclease P protein component">
    <location>
        <begin position="1"/>
        <end position="115"/>
    </location>
</feature>
<sequence length="115" mass="13426">MEKAYRIKKNADFQRIYKKGHSVANRQFVVYTCNNKEIDHFRLGISVSKKLGNAVLRNKIKRAIRENFKVHKSHILAKDIIVIARQPAKDMTTLQIQNSLEHVLKIAKVFNKKIK</sequence>
<reference key="1">
    <citation type="journal article" date="2005" name="J. Bacteriol.">
        <title>Insights on evolution of virulence and resistance from the complete genome analysis of an early methicillin-resistant Staphylococcus aureus strain and a biofilm-producing methicillin-resistant Staphylococcus epidermidis strain.</title>
        <authorList>
            <person name="Gill S.R."/>
            <person name="Fouts D.E."/>
            <person name="Archer G.L."/>
            <person name="Mongodin E.F."/>
            <person name="DeBoy R.T."/>
            <person name="Ravel J."/>
            <person name="Paulsen I.T."/>
            <person name="Kolonay J.F."/>
            <person name="Brinkac L.M."/>
            <person name="Beanan M.J."/>
            <person name="Dodson R.J."/>
            <person name="Daugherty S.C."/>
            <person name="Madupu R."/>
            <person name="Angiuoli S.V."/>
            <person name="Durkin A.S."/>
            <person name="Haft D.H."/>
            <person name="Vamathevan J.J."/>
            <person name="Khouri H."/>
            <person name="Utterback T.R."/>
            <person name="Lee C."/>
            <person name="Dimitrov G."/>
            <person name="Jiang L."/>
            <person name="Qin H."/>
            <person name="Weidman J."/>
            <person name="Tran K."/>
            <person name="Kang K.H."/>
            <person name="Hance I.R."/>
            <person name="Nelson K.E."/>
            <person name="Fraser C.M."/>
        </authorList>
    </citation>
    <scope>NUCLEOTIDE SEQUENCE [LARGE SCALE GENOMIC DNA]</scope>
    <source>
        <strain>COL</strain>
    </source>
</reference>
<comment type="function">
    <text evidence="1">RNaseP catalyzes the removal of the 5'-leader sequence from pre-tRNA to produce the mature 5'-terminus. It can also cleave other RNA substrates such as 4.5S RNA. The protein component plays an auxiliary but essential role in vivo by binding to the 5'-leader sequence and broadening the substrate specificity of the ribozyme.</text>
</comment>
<comment type="catalytic activity">
    <reaction evidence="1">
        <text>Endonucleolytic cleavage of RNA, removing 5'-extranucleotides from tRNA precursor.</text>
        <dbReference type="EC" id="3.1.26.5"/>
    </reaction>
</comment>
<comment type="subunit">
    <text evidence="1">Consists of a catalytic RNA component (M1 or rnpB) and a protein subunit.</text>
</comment>
<comment type="similarity">
    <text evidence="1">Belongs to the RnpA family.</text>
</comment>
<protein>
    <recommendedName>
        <fullName evidence="1">Ribonuclease P protein component</fullName>
        <shortName evidence="1">RNase P protein</shortName>
        <shortName evidence="1">RNaseP protein</shortName>
        <ecNumber evidence="1">3.1.26.5</ecNumber>
    </recommendedName>
    <alternativeName>
        <fullName evidence="1">Protein C5</fullName>
    </alternativeName>
</protein>
<accession>Q5HCI2</accession>
<dbReference type="EC" id="3.1.26.5" evidence="1"/>
<dbReference type="EMBL" id="CP000046">
    <property type="protein sequence ID" value="AAW37387.1"/>
    <property type="molecule type" value="Genomic_DNA"/>
</dbReference>
<dbReference type="SMR" id="Q5HCI2"/>
<dbReference type="ChEMBL" id="CHEMBL3341574"/>
<dbReference type="KEGG" id="sac:SACOL2739"/>
<dbReference type="HOGENOM" id="CLU_117179_9_1_9"/>
<dbReference type="Proteomes" id="UP000000530">
    <property type="component" value="Chromosome"/>
</dbReference>
<dbReference type="GO" id="GO:0030677">
    <property type="term" value="C:ribonuclease P complex"/>
    <property type="evidence" value="ECO:0007669"/>
    <property type="project" value="TreeGrafter"/>
</dbReference>
<dbReference type="GO" id="GO:0042781">
    <property type="term" value="F:3'-tRNA processing endoribonuclease activity"/>
    <property type="evidence" value="ECO:0007669"/>
    <property type="project" value="TreeGrafter"/>
</dbReference>
<dbReference type="GO" id="GO:0004526">
    <property type="term" value="F:ribonuclease P activity"/>
    <property type="evidence" value="ECO:0007669"/>
    <property type="project" value="UniProtKB-UniRule"/>
</dbReference>
<dbReference type="GO" id="GO:0000049">
    <property type="term" value="F:tRNA binding"/>
    <property type="evidence" value="ECO:0007669"/>
    <property type="project" value="UniProtKB-UniRule"/>
</dbReference>
<dbReference type="GO" id="GO:0001682">
    <property type="term" value="P:tRNA 5'-leader removal"/>
    <property type="evidence" value="ECO:0007669"/>
    <property type="project" value="UniProtKB-UniRule"/>
</dbReference>
<dbReference type="FunFam" id="3.30.230.10:FF:000021">
    <property type="entry name" value="Ribonuclease P protein component"/>
    <property type="match status" value="1"/>
</dbReference>
<dbReference type="Gene3D" id="3.30.230.10">
    <property type="match status" value="1"/>
</dbReference>
<dbReference type="HAMAP" id="MF_00227">
    <property type="entry name" value="RNase_P"/>
    <property type="match status" value="1"/>
</dbReference>
<dbReference type="InterPro" id="IPR020568">
    <property type="entry name" value="Ribosomal_Su5_D2-typ_SF"/>
</dbReference>
<dbReference type="InterPro" id="IPR014721">
    <property type="entry name" value="Ribsml_uS5_D2-typ_fold_subgr"/>
</dbReference>
<dbReference type="InterPro" id="IPR000100">
    <property type="entry name" value="RNase_P"/>
</dbReference>
<dbReference type="InterPro" id="IPR020539">
    <property type="entry name" value="RNase_P_CS"/>
</dbReference>
<dbReference type="NCBIfam" id="TIGR00188">
    <property type="entry name" value="rnpA"/>
    <property type="match status" value="1"/>
</dbReference>
<dbReference type="PANTHER" id="PTHR33992">
    <property type="entry name" value="RIBONUCLEASE P PROTEIN COMPONENT"/>
    <property type="match status" value="1"/>
</dbReference>
<dbReference type="PANTHER" id="PTHR33992:SF1">
    <property type="entry name" value="RIBONUCLEASE P PROTEIN COMPONENT"/>
    <property type="match status" value="1"/>
</dbReference>
<dbReference type="Pfam" id="PF00825">
    <property type="entry name" value="Ribonuclease_P"/>
    <property type="match status" value="1"/>
</dbReference>
<dbReference type="SUPFAM" id="SSF54211">
    <property type="entry name" value="Ribosomal protein S5 domain 2-like"/>
    <property type="match status" value="1"/>
</dbReference>
<dbReference type="PROSITE" id="PS00648">
    <property type="entry name" value="RIBONUCLEASE_P"/>
    <property type="match status" value="1"/>
</dbReference>
<name>RNPA_STAAC</name>
<proteinExistence type="inferred from homology"/>